<evidence type="ECO:0000255" key="1">
    <source>
        <dbReference type="HAMAP-Rule" id="MF_00682"/>
    </source>
</evidence>
<protein>
    <recommendedName>
        <fullName evidence="1">Co-chaperone protein HscB homolog</fullName>
    </recommendedName>
</protein>
<feature type="chain" id="PRO_1000212542" description="Co-chaperone protein HscB homolog">
    <location>
        <begin position="1"/>
        <end position="173"/>
    </location>
</feature>
<feature type="domain" description="J" evidence="1">
    <location>
        <begin position="5"/>
        <end position="77"/>
    </location>
</feature>
<comment type="function">
    <text evidence="1">Co-chaperone involved in the maturation of iron-sulfur cluster-containing proteins. Seems to help targeting proteins to be folded toward HscA.</text>
</comment>
<comment type="subunit">
    <text evidence="1">Interacts with HscA and stimulates its ATPase activity.</text>
</comment>
<comment type="similarity">
    <text evidence="1">Belongs to the HscB family.</text>
</comment>
<proteinExistence type="inferred from homology"/>
<reference key="1">
    <citation type="journal article" date="2009" name="Genome Biol.">
        <title>Genomic and genetic analyses of diversity and plant interactions of Pseudomonas fluorescens.</title>
        <authorList>
            <person name="Silby M.W."/>
            <person name="Cerdeno-Tarraga A.M."/>
            <person name="Vernikos G.S."/>
            <person name="Giddens S.R."/>
            <person name="Jackson R.W."/>
            <person name="Preston G.M."/>
            <person name="Zhang X.-X."/>
            <person name="Moon C.D."/>
            <person name="Gehrig S.M."/>
            <person name="Godfrey S.A.C."/>
            <person name="Knight C.G."/>
            <person name="Malone J.G."/>
            <person name="Robinson Z."/>
            <person name="Spiers A.J."/>
            <person name="Harris S."/>
            <person name="Challis G.L."/>
            <person name="Yaxley A.M."/>
            <person name="Harris D."/>
            <person name="Seeger K."/>
            <person name="Murphy L."/>
            <person name="Rutter S."/>
            <person name="Squares R."/>
            <person name="Quail M.A."/>
            <person name="Saunders E."/>
            <person name="Mavromatis K."/>
            <person name="Brettin T.S."/>
            <person name="Bentley S.D."/>
            <person name="Hothersall J."/>
            <person name="Stephens E."/>
            <person name="Thomas C.M."/>
            <person name="Parkhill J."/>
            <person name="Levy S.B."/>
            <person name="Rainey P.B."/>
            <person name="Thomson N.R."/>
        </authorList>
    </citation>
    <scope>NUCLEOTIDE SEQUENCE [LARGE SCALE GENOMIC DNA]</scope>
    <source>
        <strain>SBW25</strain>
    </source>
</reference>
<sequence length="173" mass="20301">MGTPCHFALFELQPNFRLDLEQLATRYRELARGVHPDRFADASEREQRLALEKSASLNEAYQTLKNPPKRARYLLAMNGGEVPIEVTVHDPDFLMQQMQWREELEDLQDEADVAGVAVFKRRLKTAQDELNESFAACWNDAAQREQAERLMRRMQFLDKLTYEVRQLEERLDD</sequence>
<name>HSCB_PSEFS</name>
<dbReference type="EMBL" id="AM181176">
    <property type="protein sequence ID" value="CAY52059.1"/>
    <property type="molecule type" value="Genomic_DNA"/>
</dbReference>
<dbReference type="RefSeq" id="WP_015885745.1">
    <property type="nucleotide sequence ID" value="NC_012660.1"/>
</dbReference>
<dbReference type="SMR" id="C3K1M2"/>
<dbReference type="STRING" id="294.SRM1_04653"/>
<dbReference type="PATRIC" id="fig|216595.4.peg.5200"/>
<dbReference type="eggNOG" id="COG1076">
    <property type="taxonomic scope" value="Bacteria"/>
</dbReference>
<dbReference type="HOGENOM" id="CLU_068529_2_0_6"/>
<dbReference type="OrthoDB" id="287587at2"/>
<dbReference type="GO" id="GO:1990230">
    <property type="term" value="C:iron-sulfur cluster transfer complex"/>
    <property type="evidence" value="ECO:0007669"/>
    <property type="project" value="TreeGrafter"/>
</dbReference>
<dbReference type="GO" id="GO:0001671">
    <property type="term" value="F:ATPase activator activity"/>
    <property type="evidence" value="ECO:0007669"/>
    <property type="project" value="InterPro"/>
</dbReference>
<dbReference type="GO" id="GO:0051087">
    <property type="term" value="F:protein-folding chaperone binding"/>
    <property type="evidence" value="ECO:0007669"/>
    <property type="project" value="InterPro"/>
</dbReference>
<dbReference type="GO" id="GO:0044571">
    <property type="term" value="P:[2Fe-2S] cluster assembly"/>
    <property type="evidence" value="ECO:0007669"/>
    <property type="project" value="InterPro"/>
</dbReference>
<dbReference type="GO" id="GO:0051259">
    <property type="term" value="P:protein complex oligomerization"/>
    <property type="evidence" value="ECO:0007669"/>
    <property type="project" value="InterPro"/>
</dbReference>
<dbReference type="GO" id="GO:0006457">
    <property type="term" value="P:protein folding"/>
    <property type="evidence" value="ECO:0007669"/>
    <property type="project" value="UniProtKB-UniRule"/>
</dbReference>
<dbReference type="CDD" id="cd06257">
    <property type="entry name" value="DnaJ"/>
    <property type="match status" value="1"/>
</dbReference>
<dbReference type="Gene3D" id="1.10.287.110">
    <property type="entry name" value="DnaJ domain"/>
    <property type="match status" value="1"/>
</dbReference>
<dbReference type="Gene3D" id="1.20.1280.20">
    <property type="entry name" value="HscB, C-terminal domain"/>
    <property type="match status" value="1"/>
</dbReference>
<dbReference type="HAMAP" id="MF_00682">
    <property type="entry name" value="HscB"/>
    <property type="match status" value="1"/>
</dbReference>
<dbReference type="InterPro" id="IPR001623">
    <property type="entry name" value="DnaJ_domain"/>
</dbReference>
<dbReference type="InterPro" id="IPR004640">
    <property type="entry name" value="HscB"/>
</dbReference>
<dbReference type="InterPro" id="IPR036386">
    <property type="entry name" value="HscB_C_sf"/>
</dbReference>
<dbReference type="InterPro" id="IPR009073">
    <property type="entry name" value="HscB_oligo_C"/>
</dbReference>
<dbReference type="InterPro" id="IPR036869">
    <property type="entry name" value="J_dom_sf"/>
</dbReference>
<dbReference type="NCBIfam" id="TIGR00714">
    <property type="entry name" value="hscB"/>
    <property type="match status" value="1"/>
</dbReference>
<dbReference type="NCBIfam" id="NF001420">
    <property type="entry name" value="PRK00294.1"/>
    <property type="match status" value="1"/>
</dbReference>
<dbReference type="PANTHER" id="PTHR14021">
    <property type="entry name" value="IRON-SULFUR CLUSTER CO-CHAPERONE PROTEIN HSCB"/>
    <property type="match status" value="1"/>
</dbReference>
<dbReference type="PANTHER" id="PTHR14021:SF15">
    <property type="entry name" value="IRON-SULFUR CLUSTER CO-CHAPERONE PROTEIN HSCB"/>
    <property type="match status" value="1"/>
</dbReference>
<dbReference type="Pfam" id="PF00226">
    <property type="entry name" value="DnaJ"/>
    <property type="match status" value="1"/>
</dbReference>
<dbReference type="Pfam" id="PF07743">
    <property type="entry name" value="HSCB_C"/>
    <property type="match status" value="1"/>
</dbReference>
<dbReference type="SMART" id="SM00271">
    <property type="entry name" value="DnaJ"/>
    <property type="match status" value="1"/>
</dbReference>
<dbReference type="SUPFAM" id="SSF46565">
    <property type="entry name" value="Chaperone J-domain"/>
    <property type="match status" value="1"/>
</dbReference>
<dbReference type="SUPFAM" id="SSF47144">
    <property type="entry name" value="HSC20 (HSCB), C-terminal oligomerisation domain"/>
    <property type="match status" value="1"/>
</dbReference>
<dbReference type="PROSITE" id="PS50076">
    <property type="entry name" value="DNAJ_2"/>
    <property type="match status" value="1"/>
</dbReference>
<organism>
    <name type="scientific">Pseudomonas fluorescens (strain SBW25)</name>
    <dbReference type="NCBI Taxonomy" id="216595"/>
    <lineage>
        <taxon>Bacteria</taxon>
        <taxon>Pseudomonadati</taxon>
        <taxon>Pseudomonadota</taxon>
        <taxon>Gammaproteobacteria</taxon>
        <taxon>Pseudomonadales</taxon>
        <taxon>Pseudomonadaceae</taxon>
        <taxon>Pseudomonas</taxon>
    </lineage>
</organism>
<accession>C3K1M2</accession>
<gene>
    <name evidence="1" type="primary">hscB</name>
    <name type="ordered locus">PFLU_5065</name>
</gene>
<keyword id="KW-0143">Chaperone</keyword>